<dbReference type="EMBL" id="CP000559">
    <property type="protein sequence ID" value="ABN07680.1"/>
    <property type="molecule type" value="Genomic_DNA"/>
</dbReference>
<dbReference type="RefSeq" id="WP_011833883.1">
    <property type="nucleotide sequence ID" value="NC_008942.1"/>
</dbReference>
<dbReference type="SMR" id="A2STM4"/>
<dbReference type="STRING" id="410358.Mlab_1516"/>
<dbReference type="GeneID" id="4795603"/>
<dbReference type="KEGG" id="mla:Mlab_1516"/>
<dbReference type="eggNOG" id="arCOG04154">
    <property type="taxonomic scope" value="Archaea"/>
</dbReference>
<dbReference type="HOGENOM" id="CLU_080597_2_1_2"/>
<dbReference type="OrthoDB" id="372305at2157"/>
<dbReference type="Proteomes" id="UP000000365">
    <property type="component" value="Chromosome"/>
</dbReference>
<dbReference type="GO" id="GO:1990904">
    <property type="term" value="C:ribonucleoprotein complex"/>
    <property type="evidence" value="ECO:0007669"/>
    <property type="project" value="UniProtKB-KW"/>
</dbReference>
<dbReference type="GO" id="GO:0005840">
    <property type="term" value="C:ribosome"/>
    <property type="evidence" value="ECO:0007669"/>
    <property type="project" value="UniProtKB-KW"/>
</dbReference>
<dbReference type="GO" id="GO:0003735">
    <property type="term" value="F:structural constituent of ribosome"/>
    <property type="evidence" value="ECO:0007669"/>
    <property type="project" value="InterPro"/>
</dbReference>
<dbReference type="GO" id="GO:0006412">
    <property type="term" value="P:translation"/>
    <property type="evidence" value="ECO:0007669"/>
    <property type="project" value="UniProtKB-UniRule"/>
</dbReference>
<dbReference type="CDD" id="cd11382">
    <property type="entry name" value="Ribosomal_S8e"/>
    <property type="match status" value="1"/>
</dbReference>
<dbReference type="Gene3D" id="3.10.290.70">
    <property type="match status" value="1"/>
</dbReference>
<dbReference type="HAMAP" id="MF_00029">
    <property type="entry name" value="Ribosomal_eS8"/>
    <property type="match status" value="1"/>
</dbReference>
<dbReference type="InterPro" id="IPR001047">
    <property type="entry name" value="Ribosomal_eS8"/>
</dbReference>
<dbReference type="InterPro" id="IPR018283">
    <property type="entry name" value="Ribosomal_eS8_CS"/>
</dbReference>
<dbReference type="InterPro" id="IPR020919">
    <property type="entry name" value="Ribosomal_protein_eS8_arc"/>
</dbReference>
<dbReference type="InterPro" id="IPR022309">
    <property type="entry name" value="Ribosomal_Se8/biogenesis_NSA2"/>
</dbReference>
<dbReference type="NCBIfam" id="TIGR00307">
    <property type="entry name" value="eS8"/>
    <property type="match status" value="1"/>
</dbReference>
<dbReference type="PANTHER" id="PTHR10394">
    <property type="entry name" value="40S RIBOSOMAL PROTEIN S8"/>
    <property type="match status" value="1"/>
</dbReference>
<dbReference type="Pfam" id="PF01201">
    <property type="entry name" value="Ribosomal_S8e"/>
    <property type="match status" value="1"/>
</dbReference>
<dbReference type="PROSITE" id="PS01193">
    <property type="entry name" value="RIBOSOMAL_S8E"/>
    <property type="match status" value="1"/>
</dbReference>
<keyword id="KW-1185">Reference proteome</keyword>
<keyword id="KW-0687">Ribonucleoprotein</keyword>
<keyword id="KW-0689">Ribosomal protein</keyword>
<feature type="chain" id="PRO_0000304171" description="Small ribosomal subunit protein eS8">
    <location>
        <begin position="1"/>
        <end position="125"/>
    </location>
</feature>
<sequence length="125" mass="13621">MLWQGKSVRKATGGRYHASRGKKRFEIGRSPADTIIGTTRVKTIRVTGGNTKVRALRCEFANVSDKKTGKVQKVKINSVAENAANPNYVRRNLMTKGAIITTELGKAQIVSRPGQDGVINAVLIE</sequence>
<gene>
    <name evidence="1" type="primary">rps8e</name>
    <name type="ordered locus">Mlab_1516</name>
</gene>
<name>RS8E_METLZ</name>
<reference key="1">
    <citation type="journal article" date="2009" name="Stand. Genomic Sci.">
        <title>Complete genome sequence of Methanocorpusculum labreanum type strain Z.</title>
        <authorList>
            <person name="Anderson I.J."/>
            <person name="Sieprawska-Lupa M."/>
            <person name="Goltsman E."/>
            <person name="Lapidus A."/>
            <person name="Copeland A."/>
            <person name="Glavina Del Rio T."/>
            <person name="Tice H."/>
            <person name="Dalin E."/>
            <person name="Barry K."/>
            <person name="Pitluck S."/>
            <person name="Hauser L."/>
            <person name="Land M."/>
            <person name="Lucas S."/>
            <person name="Richardson P."/>
            <person name="Whitman W.B."/>
            <person name="Kyrpides N.C."/>
        </authorList>
    </citation>
    <scope>NUCLEOTIDE SEQUENCE [LARGE SCALE GENOMIC DNA]</scope>
    <source>
        <strain>ATCC 43576 / DSM 4855 / Z</strain>
    </source>
</reference>
<proteinExistence type="inferred from homology"/>
<protein>
    <recommendedName>
        <fullName evidence="1">Small ribosomal subunit protein eS8</fullName>
    </recommendedName>
    <alternativeName>
        <fullName evidence="2">30S ribosomal protein S8e</fullName>
    </alternativeName>
</protein>
<organism>
    <name type="scientific">Methanocorpusculum labreanum (strain ATCC 43576 / DSM 4855 / Z)</name>
    <dbReference type="NCBI Taxonomy" id="410358"/>
    <lineage>
        <taxon>Archaea</taxon>
        <taxon>Methanobacteriati</taxon>
        <taxon>Methanobacteriota</taxon>
        <taxon>Stenosarchaea group</taxon>
        <taxon>Methanomicrobia</taxon>
        <taxon>Methanomicrobiales</taxon>
        <taxon>Methanocorpusculaceae</taxon>
        <taxon>Methanocorpusculum</taxon>
    </lineage>
</organism>
<comment type="subunit">
    <text evidence="1">Part of the 30S ribosomal subunit.</text>
</comment>
<comment type="similarity">
    <text evidence="1">Belongs to the eukaryotic ribosomal protein eS8 family.</text>
</comment>
<evidence type="ECO:0000255" key="1">
    <source>
        <dbReference type="HAMAP-Rule" id="MF_00029"/>
    </source>
</evidence>
<evidence type="ECO:0000305" key="2"/>
<accession>A2STM4</accession>